<keyword id="KW-0009">Actin-binding</keyword>
<sequence length="133" mass="15031">MVEWHKIIEDISKNNKFEDAAIVDYKTTKNVLAAIPNRTFAKINPGEVIPLITNHNILKPLIGQKFCIVYTNSLMDENTYAMELLTGYAPVSPIVIARTHTALIFLMGKPTTSRRDVYRTCRDHATRVRATGN</sequence>
<reference key="1">
    <citation type="journal article" date="2002" name="Virology">
        <title>The genome of camelpox virus.</title>
        <authorList>
            <person name="Afonso C.L."/>
            <person name="Tulman E.R."/>
            <person name="Lu Z."/>
            <person name="Zsak L."/>
            <person name="Sandybaev N.T."/>
            <person name="Kerembekova U.Z."/>
            <person name="Zaitsev V.L."/>
            <person name="Kutish G.F."/>
            <person name="Rock D.L."/>
        </authorList>
    </citation>
    <scope>NUCLEOTIDE SEQUENCE [LARGE SCALE GENOMIC DNA]</scope>
</reference>
<accession>Q8V2L6</accession>
<gene>
    <name type="ordered locus">CMLV161</name>
</gene>
<name>PROF_CAMPM</name>
<dbReference type="EMBL" id="AF438165">
    <property type="protein sequence ID" value="AAL73868.1"/>
    <property type="molecule type" value="Genomic_DNA"/>
</dbReference>
<dbReference type="RefSeq" id="NP_570551.1">
    <property type="nucleotide sequence ID" value="NC_003391.1"/>
</dbReference>
<dbReference type="SMR" id="Q8V2L6"/>
<dbReference type="KEGG" id="vg:932582"/>
<dbReference type="Proteomes" id="UP000152221">
    <property type="component" value="Genome"/>
</dbReference>
<dbReference type="GO" id="GO:0003779">
    <property type="term" value="F:actin binding"/>
    <property type="evidence" value="ECO:0007669"/>
    <property type="project" value="UniProtKB-KW"/>
</dbReference>
<dbReference type="Gene3D" id="3.30.450.30">
    <property type="entry name" value="Dynein light chain 2a, cytoplasmic"/>
    <property type="match status" value="1"/>
</dbReference>
<dbReference type="InterPro" id="IPR048278">
    <property type="entry name" value="PFN"/>
</dbReference>
<dbReference type="InterPro" id="IPR005455">
    <property type="entry name" value="PFN_euk"/>
</dbReference>
<dbReference type="InterPro" id="IPR036140">
    <property type="entry name" value="PFN_sf"/>
</dbReference>
<dbReference type="Pfam" id="PF00235">
    <property type="entry name" value="Profilin"/>
    <property type="match status" value="1"/>
</dbReference>
<dbReference type="SMART" id="SM00392">
    <property type="entry name" value="PROF"/>
    <property type="match status" value="1"/>
</dbReference>
<dbReference type="SUPFAM" id="SSF55770">
    <property type="entry name" value="Profilin (actin-binding protein)"/>
    <property type="match status" value="1"/>
</dbReference>
<feature type="chain" id="PRO_0000199685" description="Profilin">
    <location>
        <begin position="1"/>
        <end position="133"/>
    </location>
</feature>
<proteinExistence type="inferred from homology"/>
<protein>
    <recommendedName>
        <fullName>Profilin</fullName>
    </recommendedName>
</protein>
<organismHost>
    <name type="scientific">Camelus</name>
    <dbReference type="NCBI Taxonomy" id="9836"/>
</organismHost>
<evidence type="ECO:0000250" key="1"/>
<evidence type="ECO:0000305" key="2"/>
<comment type="function">
    <text evidence="1">More likely to influence phosphoinositide metabolism than actin assembly.</text>
</comment>
<comment type="similarity">
    <text evidence="2">Belongs to the profilin family.</text>
</comment>
<organism>
    <name type="scientific">Camelpox virus (strain M-96)</name>
    <dbReference type="NCBI Taxonomy" id="203173"/>
    <lineage>
        <taxon>Viruses</taxon>
        <taxon>Varidnaviria</taxon>
        <taxon>Bamfordvirae</taxon>
        <taxon>Nucleocytoviricota</taxon>
        <taxon>Pokkesviricetes</taxon>
        <taxon>Chitovirales</taxon>
        <taxon>Poxviridae</taxon>
        <taxon>Chordopoxvirinae</taxon>
        <taxon>Orthopoxvirus</taxon>
        <taxon>Camelpox virus</taxon>
    </lineage>
</organism>